<proteinExistence type="evidence at protein level"/>
<comment type="function">
    <text evidence="5 6 7 9">Mediates both low-affinity uptake and efflux of sugar across the plasma membrane. Involved in phloem loading by mediating export from parenchyma cells feeding H(+)-coupled import into the sieve element/companion cell complex, thus contributing to the sucrose migration from sites of synthesis in the mesophyll to the phloem (PubMed:22157085, PubMed:24027245, PubMed:25988582). Contributes to seed filling by triggering sucrose efflux involved in the transfer of sugars from seed coat to embryos (PubMed:25988582).</text>
</comment>
<comment type="subunit">
    <text evidence="6">Forms homooligomers and heterooligomers with SWEET1, SWEET3, SWEET5, SWEET6, SWEET7, SWEET8, SWEET9, SWEET12, SWEET13, SWEET15 and SWEET17.</text>
</comment>
<comment type="subcellular location">
    <subcellularLocation>
        <location evidence="5 6 7">Cell membrane</location>
        <topology evidence="1">Multi-pass membrane protein</topology>
    </subcellularLocation>
    <text evidence="5">Present in the plasma membrane of the phloem.</text>
</comment>
<comment type="tissue specificity">
    <text evidence="5 7">Expressed in leaves, especially in phloem (PubMed:22157085). Expressed in developing seeds (PubMed:25794936).</text>
</comment>
<comment type="developmental stage">
    <text evidence="7">In developing seeds, accumulates specifically at different stages. First observed at the linear mature cotyledon stage until mature seed, mostly in micropylar endosperm and the seed coat.</text>
</comment>
<comment type="induction">
    <text evidence="4">Slightly induced by the pathogenic bacteria P.syringae pv. tomato, the powdery mildew fungus G.cichoracearum, and the fungal pathogen B.cinerea.</text>
</comment>
<comment type="disruption phenotype">
    <text evidence="5 7">Under high-light conditions, plants lacking both SWEET11 and SWEET12 are defective in phloem loading and display slower growth, mild chlorosis, and high levels of starch and sugar accumulation in leaves (PubMed:22157085). In plants lacking SWEET11, SWEET12 and SWEET15, severe seed defects, which include retarded embryo development, reduced seed weight, and reduced starch and lipid content, causing a wrinkled seed phenotype. Altered sucrose efflux involved in the transfer of sugars from seed coat to embryos thus leading to starch accumulation in the seed coat but not in the embryo (PubMed:25794936).</text>
</comment>
<comment type="similarity">
    <text evidence="10">Belongs to the SWEET sugar transporter family.</text>
</comment>
<keyword id="KW-1003">Cell membrane</keyword>
<keyword id="KW-0217">Developmental protein</keyword>
<keyword id="KW-0472">Membrane</keyword>
<keyword id="KW-0597">Phosphoprotein</keyword>
<keyword id="KW-1185">Reference proteome</keyword>
<keyword id="KW-0677">Repeat</keyword>
<keyword id="KW-0762">Sugar transport</keyword>
<keyword id="KW-0812">Transmembrane</keyword>
<keyword id="KW-1133">Transmembrane helix</keyword>
<keyword id="KW-0813">Transport</keyword>
<protein>
    <recommendedName>
        <fullName evidence="8">Bidirectional sugar transporter SWEET11</fullName>
        <shortName evidence="8">AtSWEET11</shortName>
    </recommendedName>
    <alternativeName>
        <fullName evidence="8">Protein SUGARS WILL EVENTUALLY BE EXPORTED TRANSPORTERS 11</fullName>
    </alternativeName>
</protein>
<reference key="1">
    <citation type="journal article" date="2000" name="Nature">
        <title>Sequence and analysis of chromosome 3 of the plant Arabidopsis thaliana.</title>
        <authorList>
            <person name="Salanoubat M."/>
            <person name="Lemcke K."/>
            <person name="Rieger M."/>
            <person name="Ansorge W."/>
            <person name="Unseld M."/>
            <person name="Fartmann B."/>
            <person name="Valle G."/>
            <person name="Bloecker H."/>
            <person name="Perez-Alonso M."/>
            <person name="Obermaier B."/>
            <person name="Delseny M."/>
            <person name="Boutry M."/>
            <person name="Grivell L.A."/>
            <person name="Mache R."/>
            <person name="Puigdomenech P."/>
            <person name="De Simone V."/>
            <person name="Choisne N."/>
            <person name="Artiguenave F."/>
            <person name="Robert C."/>
            <person name="Brottier P."/>
            <person name="Wincker P."/>
            <person name="Cattolico L."/>
            <person name="Weissenbach J."/>
            <person name="Saurin W."/>
            <person name="Quetier F."/>
            <person name="Schaefer M."/>
            <person name="Mueller-Auer S."/>
            <person name="Gabel C."/>
            <person name="Fuchs M."/>
            <person name="Benes V."/>
            <person name="Wurmbach E."/>
            <person name="Drzonek H."/>
            <person name="Erfle H."/>
            <person name="Jordan N."/>
            <person name="Bangert S."/>
            <person name="Wiedelmann R."/>
            <person name="Kranz H."/>
            <person name="Voss H."/>
            <person name="Holland R."/>
            <person name="Brandt P."/>
            <person name="Nyakatura G."/>
            <person name="Vezzi A."/>
            <person name="D'Angelo M."/>
            <person name="Pallavicini A."/>
            <person name="Toppo S."/>
            <person name="Simionati B."/>
            <person name="Conrad A."/>
            <person name="Hornischer K."/>
            <person name="Kauer G."/>
            <person name="Loehnert T.-H."/>
            <person name="Nordsiek G."/>
            <person name="Reichelt J."/>
            <person name="Scharfe M."/>
            <person name="Schoen O."/>
            <person name="Bargues M."/>
            <person name="Terol J."/>
            <person name="Climent J."/>
            <person name="Navarro P."/>
            <person name="Collado C."/>
            <person name="Perez-Perez A."/>
            <person name="Ottenwaelder B."/>
            <person name="Duchemin D."/>
            <person name="Cooke R."/>
            <person name="Laudie M."/>
            <person name="Berger-Llauro C."/>
            <person name="Purnelle B."/>
            <person name="Masuy D."/>
            <person name="de Haan M."/>
            <person name="Maarse A.C."/>
            <person name="Alcaraz J.-P."/>
            <person name="Cottet A."/>
            <person name="Casacuberta E."/>
            <person name="Monfort A."/>
            <person name="Argiriou A."/>
            <person name="Flores M."/>
            <person name="Liguori R."/>
            <person name="Vitale D."/>
            <person name="Mannhaupt G."/>
            <person name="Haase D."/>
            <person name="Schoof H."/>
            <person name="Rudd S."/>
            <person name="Zaccaria P."/>
            <person name="Mewes H.-W."/>
            <person name="Mayer K.F.X."/>
            <person name="Kaul S."/>
            <person name="Town C.D."/>
            <person name="Koo H.L."/>
            <person name="Tallon L.J."/>
            <person name="Jenkins J."/>
            <person name="Rooney T."/>
            <person name="Rizzo M."/>
            <person name="Walts A."/>
            <person name="Utterback T."/>
            <person name="Fujii C.Y."/>
            <person name="Shea T.P."/>
            <person name="Creasy T.H."/>
            <person name="Haas B."/>
            <person name="Maiti R."/>
            <person name="Wu D."/>
            <person name="Peterson J."/>
            <person name="Van Aken S."/>
            <person name="Pai G."/>
            <person name="Militscher J."/>
            <person name="Sellers P."/>
            <person name="Gill J.E."/>
            <person name="Feldblyum T.V."/>
            <person name="Preuss D."/>
            <person name="Lin X."/>
            <person name="Nierman W.C."/>
            <person name="Salzberg S.L."/>
            <person name="White O."/>
            <person name="Venter J.C."/>
            <person name="Fraser C.M."/>
            <person name="Kaneko T."/>
            <person name="Nakamura Y."/>
            <person name="Sato S."/>
            <person name="Kato T."/>
            <person name="Asamizu E."/>
            <person name="Sasamoto S."/>
            <person name="Kimura T."/>
            <person name="Idesawa K."/>
            <person name="Kawashima K."/>
            <person name="Kishida Y."/>
            <person name="Kiyokawa C."/>
            <person name="Kohara M."/>
            <person name="Matsumoto M."/>
            <person name="Matsuno A."/>
            <person name="Muraki A."/>
            <person name="Nakayama S."/>
            <person name="Nakazaki N."/>
            <person name="Shinpo S."/>
            <person name="Takeuchi C."/>
            <person name="Wada T."/>
            <person name="Watanabe A."/>
            <person name="Yamada M."/>
            <person name="Yasuda M."/>
            <person name="Tabata S."/>
        </authorList>
    </citation>
    <scope>NUCLEOTIDE SEQUENCE [LARGE SCALE GENOMIC DNA]</scope>
    <source>
        <strain>cv. Columbia</strain>
    </source>
</reference>
<reference key="2">
    <citation type="journal article" date="2017" name="Plant J.">
        <title>Araport11: a complete reannotation of the Arabidopsis thaliana reference genome.</title>
        <authorList>
            <person name="Cheng C.Y."/>
            <person name="Krishnakumar V."/>
            <person name="Chan A.P."/>
            <person name="Thibaud-Nissen F."/>
            <person name="Schobel S."/>
            <person name="Town C.D."/>
        </authorList>
    </citation>
    <scope>GENOME REANNOTATION</scope>
    <source>
        <strain>cv. Columbia</strain>
    </source>
</reference>
<reference key="3">
    <citation type="journal article" date="2003" name="Science">
        <title>Empirical analysis of transcriptional activity in the Arabidopsis genome.</title>
        <authorList>
            <person name="Yamada K."/>
            <person name="Lim J."/>
            <person name="Dale J.M."/>
            <person name="Chen H."/>
            <person name="Shinn P."/>
            <person name="Palm C.J."/>
            <person name="Southwick A.M."/>
            <person name="Wu H.C."/>
            <person name="Kim C.J."/>
            <person name="Nguyen M."/>
            <person name="Pham P.K."/>
            <person name="Cheuk R.F."/>
            <person name="Karlin-Newmann G."/>
            <person name="Liu S.X."/>
            <person name="Lam B."/>
            <person name="Sakano H."/>
            <person name="Wu T."/>
            <person name="Yu G."/>
            <person name="Miranda M."/>
            <person name="Quach H.L."/>
            <person name="Tripp M."/>
            <person name="Chang C.H."/>
            <person name="Lee J.M."/>
            <person name="Toriumi M.J."/>
            <person name="Chan M.M."/>
            <person name="Tang C.C."/>
            <person name="Onodera C.S."/>
            <person name="Deng J.M."/>
            <person name="Akiyama K."/>
            <person name="Ansari Y."/>
            <person name="Arakawa T."/>
            <person name="Banh J."/>
            <person name="Banno F."/>
            <person name="Bowser L."/>
            <person name="Brooks S.Y."/>
            <person name="Carninci P."/>
            <person name="Chao Q."/>
            <person name="Choy N."/>
            <person name="Enju A."/>
            <person name="Goldsmith A.D."/>
            <person name="Gurjal M."/>
            <person name="Hansen N.F."/>
            <person name="Hayashizaki Y."/>
            <person name="Johnson-Hopson C."/>
            <person name="Hsuan V.W."/>
            <person name="Iida K."/>
            <person name="Karnes M."/>
            <person name="Khan S."/>
            <person name="Koesema E."/>
            <person name="Ishida J."/>
            <person name="Jiang P.X."/>
            <person name="Jones T."/>
            <person name="Kawai J."/>
            <person name="Kamiya A."/>
            <person name="Meyers C."/>
            <person name="Nakajima M."/>
            <person name="Narusaka M."/>
            <person name="Seki M."/>
            <person name="Sakurai T."/>
            <person name="Satou M."/>
            <person name="Tamse R."/>
            <person name="Vaysberg M."/>
            <person name="Wallender E.K."/>
            <person name="Wong C."/>
            <person name="Yamamura Y."/>
            <person name="Yuan S."/>
            <person name="Shinozaki K."/>
            <person name="Davis R.W."/>
            <person name="Theologis A."/>
            <person name="Ecker J.R."/>
        </authorList>
    </citation>
    <scope>NUCLEOTIDE SEQUENCE [LARGE SCALE MRNA]</scope>
    <source>
        <strain>cv. Columbia</strain>
    </source>
</reference>
<reference key="4">
    <citation type="journal article" date="2007" name="Mol. Cell. Proteomics">
        <title>Temporal analysis of sucrose-induced phosphorylation changes in plasma membrane proteins of Arabidopsis.</title>
        <authorList>
            <person name="Niittylae T."/>
            <person name="Fuglsang A.T."/>
            <person name="Palmgren M.G."/>
            <person name="Frommer W.B."/>
            <person name="Schulze W.X."/>
        </authorList>
    </citation>
    <scope>IDENTIFICATION BY MASS SPECTROMETRY [LARGE SCALE ANALYSIS]</scope>
    <source>
        <tissue>Seedling</tissue>
    </source>
</reference>
<reference key="5">
    <citation type="journal article" date="2009" name="Plant Physiol.">
        <title>Large-scale Arabidopsis phosphoproteome profiling reveals novel chloroplast kinase substrates and phosphorylation networks.</title>
        <authorList>
            <person name="Reiland S."/>
            <person name="Messerli G."/>
            <person name="Baerenfaller K."/>
            <person name="Gerrits B."/>
            <person name="Endler A."/>
            <person name="Grossmann J."/>
            <person name="Gruissem W."/>
            <person name="Baginsky S."/>
        </authorList>
    </citation>
    <scope>PHOSPHORYLATION [LARGE SCALE ANALYSIS] AT THR-276</scope>
    <scope>IDENTIFICATION BY MASS SPECTROMETRY [LARGE SCALE ANALYSIS]</scope>
</reference>
<reference key="6">
    <citation type="journal article" date="2010" name="Nature">
        <title>Sugar transporters for intercellular exchange and nutrition of pathogens.</title>
        <authorList>
            <person name="Chen L.-Q."/>
            <person name="Hou B.-H."/>
            <person name="Lalonde S."/>
            <person name="Takanaga H."/>
            <person name="Hartung M.L."/>
            <person name="Qu X.-Q."/>
            <person name="Guo W.-J."/>
            <person name="Kim J.-G."/>
            <person name="Underwood W."/>
            <person name="Chaudhuri B."/>
            <person name="Chermak D."/>
            <person name="Antony G."/>
            <person name="White F.F."/>
            <person name="Somerville S.C."/>
            <person name="Mudgett M.B."/>
            <person name="Frommer W.B."/>
        </authorList>
    </citation>
    <scope>INDUCTION BY PATHOGENS</scope>
    <scope>GENE FAMILY</scope>
    <scope>NOMENCLATURE</scope>
    <source>
        <strain>cv. Columbia</strain>
    </source>
</reference>
<reference key="7">
    <citation type="journal article" date="2012" name="Mol. Plant">
        <title>SWEET as sugar: new sucrose effluxers in plants.</title>
        <authorList>
            <person name="Baker R.F."/>
            <person name="Leach K.A."/>
            <person name="Braun D.M."/>
        </authorList>
    </citation>
    <scope>REVIEW</scope>
</reference>
<reference key="8">
    <citation type="journal article" date="2012" name="Science">
        <title>Sucrose efflux mediated by SWEET proteins as a key step for phloem transport.</title>
        <authorList>
            <person name="Chen L.-Q."/>
            <person name="Qu X.-Q."/>
            <person name="Hou B.-H."/>
            <person name="Sosso D."/>
            <person name="Osorio S."/>
            <person name="Fernie A.R."/>
            <person name="Frommer W.B."/>
        </authorList>
    </citation>
    <scope>FUNCTION</scope>
    <scope>DISRUPTION PHENOTYPE</scope>
    <scope>SUBCELLULAR LOCATION</scope>
    <scope>TISSUE SPECIFICITY</scope>
    <source>
        <strain>cv. Columbia</strain>
    </source>
</reference>
<reference key="9">
    <citation type="journal article" date="2013" name="Proc. Natl. Acad. Sci. U.S.A.">
        <title>Functional role of oligomerization for bacterial and plant SWEET sugar transporter family.</title>
        <authorList>
            <person name="Xuan Y.H."/>
            <person name="Hu Y.B."/>
            <person name="Chen L.-Q."/>
            <person name="Sosso D."/>
            <person name="Ducat D.C."/>
            <person name="Hou B.-H."/>
            <person name="Frommer W.B."/>
        </authorList>
    </citation>
    <scope>FUNCTION</scope>
    <scope>SUBUNIT</scope>
    <scope>INTERACTION WITH SWEET1; SWEET3; SWEET5; SWEET6; SWEET7; SWEET8; SWEET9; SWEET12; SWEET13; SWEET15 AND SWEET17</scope>
    <scope>SUBCELLULAR LOCATION</scope>
</reference>
<reference key="10">
    <citation type="journal article" date="2015" name="Curr. Opin. Plant Biol.">
        <title>SWEETs, transporters for intracellular and intercellular sugar translocation.</title>
        <authorList>
            <person name="Eom J.-S."/>
            <person name="Chen L.-Q."/>
            <person name="Sosso D."/>
            <person name="Julius B.T."/>
            <person name="Lin I.W."/>
            <person name="Qu X.-Q."/>
            <person name="Braun D.M."/>
            <person name="Frommer W.B."/>
        </authorList>
    </citation>
    <scope>REVIEW</scope>
    <source>
        <strain>cv. Columbia</strain>
    </source>
</reference>
<reference key="11">
    <citation type="journal article" date="2015" name="Plant Cell">
        <title>A cascade of sequentially expressed sucrose transporters in the seed coat and endosperm provides nutrition for the Arabidopsis embryo.</title>
        <authorList>
            <person name="Chen L.Q."/>
            <person name="Lin I.W."/>
            <person name="Qu X.Q."/>
            <person name="Sosso D."/>
            <person name="McFarlane H.E."/>
            <person name="Londono A."/>
            <person name="Samuels A.L."/>
            <person name="Frommer W.B."/>
        </authorList>
    </citation>
    <scope>FUNCTION</scope>
    <scope>DISRUPTION PHENOTYPE</scope>
    <scope>DEVELOPMENTAL STAGE</scope>
    <scope>TISSUE SPECIFICITY</scope>
    <scope>SUBCELLULAR LOCATION</scope>
    <source>
        <strain>cv. Columbia</strain>
    </source>
</reference>
<organism>
    <name type="scientific">Arabidopsis thaliana</name>
    <name type="common">Mouse-ear cress</name>
    <dbReference type="NCBI Taxonomy" id="3702"/>
    <lineage>
        <taxon>Eukaryota</taxon>
        <taxon>Viridiplantae</taxon>
        <taxon>Streptophyta</taxon>
        <taxon>Embryophyta</taxon>
        <taxon>Tracheophyta</taxon>
        <taxon>Spermatophyta</taxon>
        <taxon>Magnoliopsida</taxon>
        <taxon>eudicotyledons</taxon>
        <taxon>Gunneridae</taxon>
        <taxon>Pentapetalae</taxon>
        <taxon>rosids</taxon>
        <taxon>malvids</taxon>
        <taxon>Brassicales</taxon>
        <taxon>Brassicaceae</taxon>
        <taxon>Camelineae</taxon>
        <taxon>Arabidopsis</taxon>
    </lineage>
</organism>
<gene>
    <name evidence="8" type="primary">SWEET11</name>
    <name type="ordered locus">At3g48740</name>
    <name type="ORF">T21J18.1</name>
    <name type="ORF">T8P19.250</name>
</gene>
<accession>Q9SMM5</accession>
<name>SWT11_ARATH</name>
<dbReference type="EMBL" id="AL133315">
    <property type="protein sequence ID" value="CAB62363.1"/>
    <property type="molecule type" value="Genomic_DNA"/>
</dbReference>
<dbReference type="EMBL" id="CP002686">
    <property type="protein sequence ID" value="AEE78451.1"/>
    <property type="molecule type" value="Genomic_DNA"/>
</dbReference>
<dbReference type="EMBL" id="AF361825">
    <property type="protein sequence ID" value="AAK32837.1"/>
    <property type="molecule type" value="mRNA"/>
</dbReference>
<dbReference type="EMBL" id="AF419559">
    <property type="protein sequence ID" value="AAL31891.1"/>
    <property type="molecule type" value="mRNA"/>
</dbReference>
<dbReference type="EMBL" id="AY070412">
    <property type="protein sequence ID" value="AAL49908.1"/>
    <property type="molecule type" value="mRNA"/>
</dbReference>
<dbReference type="EMBL" id="AY078041">
    <property type="protein sequence ID" value="AAL77742.1"/>
    <property type="molecule type" value="mRNA"/>
</dbReference>
<dbReference type="EMBL" id="AY096594">
    <property type="protein sequence ID" value="AAM20244.1"/>
    <property type="molecule type" value="mRNA"/>
</dbReference>
<dbReference type="PIR" id="T46218">
    <property type="entry name" value="T46218"/>
</dbReference>
<dbReference type="RefSeq" id="NP_190443.1">
    <property type="nucleotide sequence ID" value="NM_114733.4"/>
</dbReference>
<dbReference type="SMR" id="Q9SMM5"/>
<dbReference type="BioGRID" id="9353">
    <property type="interactions" value="11"/>
</dbReference>
<dbReference type="FunCoup" id="Q9SMM5">
    <property type="interactions" value="1691"/>
</dbReference>
<dbReference type="IntAct" id="Q9SMM5">
    <property type="interactions" value="1"/>
</dbReference>
<dbReference type="STRING" id="3702.Q9SMM5"/>
<dbReference type="TCDB" id="2.A.123.1.13">
    <property type="family name" value="the sweet, pq-loop, saliva, mtn3 (sweet) family"/>
</dbReference>
<dbReference type="iPTMnet" id="Q9SMM5"/>
<dbReference type="PaxDb" id="3702-AT3G48740.1"/>
<dbReference type="ProteomicsDB" id="226800"/>
<dbReference type="EnsemblPlants" id="AT3G48740.1">
    <property type="protein sequence ID" value="AT3G48740.1"/>
    <property type="gene ID" value="AT3G48740"/>
</dbReference>
<dbReference type="GeneID" id="824035"/>
<dbReference type="Gramene" id="AT3G48740.1">
    <property type="protein sequence ID" value="AT3G48740.1"/>
    <property type="gene ID" value="AT3G48740"/>
</dbReference>
<dbReference type="KEGG" id="ath:AT3G48740"/>
<dbReference type="Araport" id="AT3G48740"/>
<dbReference type="TAIR" id="AT3G48740">
    <property type="gene designation" value="SWEET11"/>
</dbReference>
<dbReference type="eggNOG" id="KOG1623">
    <property type="taxonomic scope" value="Eukaryota"/>
</dbReference>
<dbReference type="HOGENOM" id="CLU_048643_4_0_1"/>
<dbReference type="InParanoid" id="Q9SMM5"/>
<dbReference type="OMA" id="TENTWAF"/>
<dbReference type="OrthoDB" id="409725at2759"/>
<dbReference type="PhylomeDB" id="Q9SMM5"/>
<dbReference type="PRO" id="PR:Q9SMM5"/>
<dbReference type="Proteomes" id="UP000006548">
    <property type="component" value="Chromosome 3"/>
</dbReference>
<dbReference type="ExpressionAtlas" id="Q9SMM5">
    <property type="expression patterns" value="baseline and differential"/>
</dbReference>
<dbReference type="GO" id="GO:0005886">
    <property type="term" value="C:plasma membrane"/>
    <property type="evidence" value="ECO:0000314"/>
    <property type="project" value="UniProtKB"/>
</dbReference>
<dbReference type="GO" id="GO:0008515">
    <property type="term" value="F:sucrose transmembrane transporter activity"/>
    <property type="evidence" value="ECO:0000314"/>
    <property type="project" value="TAIR"/>
</dbReference>
<dbReference type="GO" id="GO:0051119">
    <property type="term" value="F:sugar transmembrane transporter activity"/>
    <property type="evidence" value="ECO:0000250"/>
    <property type="project" value="UniProtKB"/>
</dbReference>
<dbReference type="GO" id="GO:0009793">
    <property type="term" value="P:embryo development ending in seed dormancy"/>
    <property type="evidence" value="ECO:0000315"/>
    <property type="project" value="UniProtKB"/>
</dbReference>
<dbReference type="GO" id="GO:0051260">
    <property type="term" value="P:protein homooligomerization"/>
    <property type="evidence" value="ECO:0000314"/>
    <property type="project" value="UniProtKB"/>
</dbReference>
<dbReference type="GO" id="GO:0010431">
    <property type="term" value="P:seed maturation"/>
    <property type="evidence" value="ECO:0000315"/>
    <property type="project" value="UniProtKB"/>
</dbReference>
<dbReference type="GO" id="GO:0015770">
    <property type="term" value="P:sucrose transport"/>
    <property type="evidence" value="ECO:0000314"/>
    <property type="project" value="TAIR"/>
</dbReference>
<dbReference type="FunFam" id="1.20.1280.290:FF:000001">
    <property type="entry name" value="Bidirectional sugar transporter SWEET"/>
    <property type="match status" value="1"/>
</dbReference>
<dbReference type="FunFam" id="1.20.1280.290:FF:000003">
    <property type="entry name" value="Bidirectional sugar transporter SWEET"/>
    <property type="match status" value="1"/>
</dbReference>
<dbReference type="Gene3D" id="1.20.1280.290">
    <property type="match status" value="2"/>
</dbReference>
<dbReference type="InterPro" id="IPR047664">
    <property type="entry name" value="SWEET"/>
</dbReference>
<dbReference type="InterPro" id="IPR004316">
    <property type="entry name" value="SWEET_rpt"/>
</dbReference>
<dbReference type="PANTHER" id="PTHR10791:SF22">
    <property type="entry name" value="BIDIRECTIONAL SUGAR TRANSPORTER SWEET11"/>
    <property type="match status" value="1"/>
</dbReference>
<dbReference type="PANTHER" id="PTHR10791">
    <property type="entry name" value="RAG1-ACTIVATING PROTEIN 1"/>
    <property type="match status" value="1"/>
</dbReference>
<dbReference type="Pfam" id="PF03083">
    <property type="entry name" value="MtN3_slv"/>
    <property type="match status" value="2"/>
</dbReference>
<feature type="chain" id="PRO_0000404111" description="Bidirectional sugar transporter SWEET11">
    <location>
        <begin position="1"/>
        <end position="289"/>
    </location>
</feature>
<feature type="topological domain" description="Extracellular" evidence="2">
    <location>
        <begin position="1"/>
        <end position="9"/>
    </location>
</feature>
<feature type="transmembrane region" description="Helical; Name=1" evidence="2">
    <location>
        <begin position="10"/>
        <end position="30"/>
    </location>
</feature>
<feature type="topological domain" description="Cytoplasmic" evidence="2">
    <location>
        <begin position="31"/>
        <end position="43"/>
    </location>
</feature>
<feature type="transmembrane region" description="Helical; Name=2" evidence="2">
    <location>
        <begin position="44"/>
        <end position="64"/>
    </location>
</feature>
<feature type="topological domain" description="Extracellular" evidence="2">
    <location>
        <begin position="65"/>
        <end position="70"/>
    </location>
</feature>
<feature type="transmembrane region" description="Helical; Name=3" evidence="2">
    <location>
        <begin position="71"/>
        <end position="91"/>
    </location>
</feature>
<feature type="topological domain" description="Cytoplasmic" evidence="2">
    <location>
        <begin position="92"/>
        <end position="105"/>
    </location>
</feature>
<feature type="transmembrane region" description="Helical; Name=4" evidence="2">
    <location>
        <begin position="106"/>
        <end position="126"/>
    </location>
</feature>
<feature type="topological domain" description="Extracellular" evidence="2">
    <location>
        <begin position="127"/>
        <end position="133"/>
    </location>
</feature>
<feature type="transmembrane region" description="Helical; Name=5" evidence="2">
    <location>
        <begin position="134"/>
        <end position="154"/>
    </location>
</feature>
<feature type="topological domain" description="Cytoplasmic" evidence="2">
    <location>
        <begin position="155"/>
        <end position="167"/>
    </location>
</feature>
<feature type="transmembrane region" description="Helical; Name=6" evidence="2">
    <location>
        <begin position="168"/>
        <end position="188"/>
    </location>
</feature>
<feature type="topological domain" description="Extracellular" evidence="2">
    <location>
        <begin position="189"/>
        <end position="192"/>
    </location>
</feature>
<feature type="transmembrane region" description="Helical; Name=7" evidence="2">
    <location>
        <begin position="193"/>
        <end position="213"/>
    </location>
</feature>
<feature type="topological domain" description="Cytoplasmic" evidence="2">
    <location>
        <begin position="214"/>
        <end position="289"/>
    </location>
</feature>
<feature type="domain" description="MtN3/slv 1">
    <location>
        <begin position="12"/>
        <end position="98"/>
    </location>
</feature>
<feature type="domain" description="MtN3/slv 2">
    <location>
        <begin position="134"/>
        <end position="218"/>
    </location>
</feature>
<feature type="region of interest" description="Disordered" evidence="3">
    <location>
        <begin position="266"/>
        <end position="289"/>
    </location>
</feature>
<feature type="modified residue" description="Phosphothreonine" evidence="11">
    <location>
        <position position="276"/>
    </location>
</feature>
<sequence length="289" mass="31921">MSLFNTENTWAFVFGLLGNLISFAVFLSPVPTFYRIWKKKTTEGFQSIPYVVALFSATLWLYYATQKKDVFLLVTINAFGCFIETIYISMFLAYAPKPARMLTVKMLLLMNFGGFCAILLLCQFLVKGATRAKIIGGICVGFSVCVFAAPLSIIRTVIKTRSVEYMPFSLSLTLTISAVIWLLYGLALKDIYVAFPNVLGFALGALQMILYVVYKYCKTSPHLGEKEVEAAKLPEVSLDMLKLGTVSSPEPISVVRQANKCTCGNDRRAEIEDGQTPKHGKQSSSAAAT</sequence>
<evidence type="ECO:0000250" key="1"/>
<evidence type="ECO:0000255" key="2"/>
<evidence type="ECO:0000256" key="3">
    <source>
        <dbReference type="SAM" id="MobiDB-lite"/>
    </source>
</evidence>
<evidence type="ECO:0000269" key="4">
    <source>
    </source>
</evidence>
<evidence type="ECO:0000269" key="5">
    <source>
    </source>
</evidence>
<evidence type="ECO:0000269" key="6">
    <source>
    </source>
</evidence>
<evidence type="ECO:0000269" key="7">
    <source>
    </source>
</evidence>
<evidence type="ECO:0000303" key="8">
    <source>
    </source>
</evidence>
<evidence type="ECO:0000303" key="9">
    <source>
    </source>
</evidence>
<evidence type="ECO:0000305" key="10"/>
<evidence type="ECO:0007744" key="11">
    <source>
    </source>
</evidence>